<reference key="1">
    <citation type="journal article" date="1996" name="DNA Res.">
        <title>Sequence analysis of the genome of the unicellular cyanobacterium Synechocystis sp. strain PCC6803. II. Sequence determination of the entire genome and assignment of potential protein-coding regions.</title>
        <authorList>
            <person name="Kaneko T."/>
            <person name="Sato S."/>
            <person name="Kotani H."/>
            <person name="Tanaka A."/>
            <person name="Asamizu E."/>
            <person name="Nakamura Y."/>
            <person name="Miyajima N."/>
            <person name="Hirosawa M."/>
            <person name="Sugiura M."/>
            <person name="Sasamoto S."/>
            <person name="Kimura T."/>
            <person name="Hosouchi T."/>
            <person name="Matsuno A."/>
            <person name="Muraki A."/>
            <person name="Nakazaki N."/>
            <person name="Naruo K."/>
            <person name="Okumura S."/>
            <person name="Shimpo S."/>
            <person name="Takeuchi C."/>
            <person name="Wada T."/>
            <person name="Watanabe A."/>
            <person name="Yamada M."/>
            <person name="Yasuda M."/>
            <person name="Tabata S."/>
        </authorList>
    </citation>
    <scope>NUCLEOTIDE SEQUENCE [LARGE SCALE GENOMIC DNA]</scope>
    <source>
        <strain>ATCC 27184 / PCC 6803 / Kazusa</strain>
    </source>
</reference>
<reference key="2">
    <citation type="journal article" date="2005" name="J. Biol. Chem.">
        <title>Higher plant plastids and cyanobacteria have folate carriers related to those of trypanosomatids.</title>
        <authorList>
            <person name="Klaus S.M."/>
            <person name="Kunji E.R."/>
            <person name="Bozzo G.G."/>
            <person name="Noiriel A."/>
            <person name="de la Garza R.D."/>
            <person name="Basset G.J."/>
            <person name="Ravanel S."/>
            <person name="Rebeille F."/>
            <person name="Gregory J.F. III"/>
            <person name="Hanson A.D."/>
        </authorList>
    </citation>
    <scope>FUNCTION</scope>
</reference>
<reference key="3">
    <citation type="journal article" date="2010" name="J. Biol. Chem.">
        <title>Identification of transport-critical residues in a folate transporter from the folate-biopterin transporter (FBT) family.</title>
        <authorList>
            <person name="Eudes A."/>
            <person name="Kunji E.R."/>
            <person name="Noiriel A."/>
            <person name="Klaus S.M."/>
            <person name="Vickers T.J."/>
            <person name="Beverley S.M."/>
            <person name="Gregory J.F. III"/>
            <person name="Hanson A.D."/>
        </authorList>
    </citation>
    <scope>MUTAGENESIS OF ARG-53; LYS-61; ASP-62; TRP-82; LYS-85; ASP-93; ASP-145; ASP-149; ARG-155; PHE-252; THR-259; GLU-263; PHE-267; ARG-309; ARG-335; ASP-348; GLN-357; ARG-369; CYS-371; PHE-380; MET-384 AND ASN-388</scope>
    <scope>FUNCTION</scope>
</reference>
<organism>
    <name type="scientific">Synechocystis sp. (strain ATCC 27184 / PCC 6803 / Kazusa)</name>
    <dbReference type="NCBI Taxonomy" id="1111708"/>
    <lineage>
        <taxon>Bacteria</taxon>
        <taxon>Bacillati</taxon>
        <taxon>Cyanobacteriota</taxon>
        <taxon>Cyanophyceae</taxon>
        <taxon>Synechococcales</taxon>
        <taxon>Merismopediaceae</taxon>
        <taxon>Synechocystis</taxon>
    </lineage>
</organism>
<comment type="function">
    <text evidence="3 4">Mediates folate monoglutamate transport involved in tetrahydrofolate biosynthesis. It also mediates transport of antifolates, such as methotrexate and aminopterin.</text>
</comment>
<comment type="subcellular location">
    <subcellularLocation>
        <location evidence="5">Cell membrane</location>
        <topology evidence="5">Multi-pass membrane protein</topology>
    </subcellularLocation>
</comment>
<comment type="similarity">
    <text evidence="5">Belongs to the major facilitator superfamily. Folate-biopterin transporter (TC 2.A.71) family.</text>
</comment>
<protein>
    <recommendedName>
        <fullName>Folate-biopterin transporter</fullName>
    </recommendedName>
</protein>
<keyword id="KW-1003">Cell membrane</keyword>
<keyword id="KW-0472">Membrane</keyword>
<keyword id="KW-1185">Reference proteome</keyword>
<keyword id="KW-0812">Transmembrane</keyword>
<keyword id="KW-1133">Transmembrane helix</keyword>
<keyword id="KW-0813">Transport</keyword>
<name>FBT_SYNY3</name>
<dbReference type="EMBL" id="BA000022">
    <property type="protein sequence ID" value="BAA10362.1"/>
    <property type="molecule type" value="Genomic_DNA"/>
</dbReference>
<dbReference type="PIR" id="S76516">
    <property type="entry name" value="S76516"/>
</dbReference>
<dbReference type="IntAct" id="Q55721">
    <property type="interactions" value="9"/>
</dbReference>
<dbReference type="STRING" id="1148.gene:10499863"/>
<dbReference type="TCDB" id="2.A.71.2.3">
    <property type="family name" value="the folate-biopterin transporter (fbt) family"/>
</dbReference>
<dbReference type="PaxDb" id="1148-1001631"/>
<dbReference type="EnsemblBacteria" id="BAA10362">
    <property type="protein sequence ID" value="BAA10362"/>
    <property type="gene ID" value="BAA10362"/>
</dbReference>
<dbReference type="KEGG" id="syn:slr0642"/>
<dbReference type="eggNOG" id="COG2211">
    <property type="taxonomic scope" value="Bacteria"/>
</dbReference>
<dbReference type="InParanoid" id="Q55721"/>
<dbReference type="PhylomeDB" id="Q55721"/>
<dbReference type="Proteomes" id="UP000001425">
    <property type="component" value="Chromosome"/>
</dbReference>
<dbReference type="GO" id="GO:0005886">
    <property type="term" value="C:plasma membrane"/>
    <property type="evidence" value="ECO:0007669"/>
    <property type="project" value="UniProtKB-SubCell"/>
</dbReference>
<dbReference type="GO" id="GO:0015231">
    <property type="term" value="F:5-formyltetrahydrofolate transmembrane transporter activity"/>
    <property type="evidence" value="ECO:0000314"/>
    <property type="project" value="UniProtKB"/>
</dbReference>
<dbReference type="GO" id="GO:0008517">
    <property type="term" value="F:folic acid transmembrane transporter activity"/>
    <property type="evidence" value="ECO:0000314"/>
    <property type="project" value="UniProtKB"/>
</dbReference>
<dbReference type="GO" id="GO:0015350">
    <property type="term" value="F:methotrexate transmembrane transporter activity"/>
    <property type="evidence" value="ECO:0000314"/>
    <property type="project" value="UniProtKB"/>
</dbReference>
<dbReference type="GO" id="GO:0015885">
    <property type="term" value="P:5-formyltetrahydrofolate transport"/>
    <property type="evidence" value="ECO:0000314"/>
    <property type="project" value="UniProtKB"/>
</dbReference>
<dbReference type="GO" id="GO:0015884">
    <property type="term" value="P:folic acid transport"/>
    <property type="evidence" value="ECO:0000314"/>
    <property type="project" value="UniProtKB"/>
</dbReference>
<dbReference type="GO" id="GO:0051958">
    <property type="term" value="P:methotrexate transport"/>
    <property type="evidence" value="ECO:0000314"/>
    <property type="project" value="UniProtKB"/>
</dbReference>
<dbReference type="CDD" id="cd17484">
    <property type="entry name" value="MFS_FBT"/>
    <property type="match status" value="1"/>
</dbReference>
<dbReference type="Gene3D" id="1.20.1250.20">
    <property type="entry name" value="MFS general substrate transporter like domains"/>
    <property type="match status" value="1"/>
</dbReference>
<dbReference type="InterPro" id="IPR039309">
    <property type="entry name" value="BT1"/>
</dbReference>
<dbReference type="InterPro" id="IPR004324">
    <property type="entry name" value="FBT"/>
</dbReference>
<dbReference type="InterPro" id="IPR036259">
    <property type="entry name" value="MFS_trans_sf"/>
</dbReference>
<dbReference type="NCBIfam" id="TIGR00788">
    <property type="entry name" value="fbt"/>
    <property type="match status" value="1"/>
</dbReference>
<dbReference type="PANTHER" id="PTHR31585">
    <property type="entry name" value="FOLATE-BIOPTERIN TRANSPORTER 1, CHLOROPLASTIC"/>
    <property type="match status" value="1"/>
</dbReference>
<dbReference type="PANTHER" id="PTHR31585:SF0">
    <property type="entry name" value="FOLATE-BIOPTERIN TRANSPORTER 1, CHLOROPLASTIC"/>
    <property type="match status" value="1"/>
</dbReference>
<dbReference type="Pfam" id="PF03092">
    <property type="entry name" value="BT1"/>
    <property type="match status" value="1"/>
</dbReference>
<dbReference type="SUPFAM" id="SSF103473">
    <property type="entry name" value="MFS general substrate transporter"/>
    <property type="match status" value="1"/>
</dbReference>
<sequence length="494" mass="53586">MLVAMSMTPIAILFSTPLKRFLREKVLLGNAPSWELLAILSIYFVQGVLGLSRLAVSFFLKDELGLSPAAMGALIGLGAAPWILKPVLGLMSDTVPLFGYRRRSYLWLSGLMGSAGWLLFAAWVSSGTQAGLVLLFTSLSVAIGDVIVDSLVVERAQRESLAQVGSLQSLTWGAAAVGGIITAYASGALLEWFSTRTVFAITAIFPLLTVGAAFLISEVSTAEEEEKPQPKAQIKLVWQAVRQKTILLPTLFIFFWQATPSAESAFFYFTTNELGFEPKFLGRVRLVTSVAGLIGVGLYQRFLKTLPFRVIMGWSTVISSLLGLTTLILITHANRAMGIDDHWFSLGDSIILTVTGQIAFMPVLVLAARLCPPGIEATLFALLMSVMNLAGVLSFEVGSLLTHWLGVTETQFDNLALLVIITNLSTLLPLPFLGLLPAGDPQVKDKTEKEDNPDDPGDRLVLPPAEVFEHHTVGSLSDQNFLPEFFPEKSSSRP</sequence>
<proteinExistence type="evidence at protein level"/>
<evidence type="ECO:0000255" key="1"/>
<evidence type="ECO:0000256" key="2">
    <source>
        <dbReference type="SAM" id="MobiDB-lite"/>
    </source>
</evidence>
<evidence type="ECO:0000269" key="3">
    <source>
    </source>
</evidence>
<evidence type="ECO:0000269" key="4">
    <source>
    </source>
</evidence>
<evidence type="ECO:0000305" key="5"/>
<gene>
    <name type="ordered locus">slr0642</name>
</gene>
<accession>Q55721</accession>
<feature type="chain" id="PRO_0000420112" description="Folate-biopterin transporter">
    <location>
        <begin position="1"/>
        <end position="494"/>
    </location>
</feature>
<feature type="transmembrane region" description="Helical" evidence="1">
    <location>
        <begin position="31"/>
        <end position="51"/>
    </location>
</feature>
<feature type="transmembrane region" description="Helical" evidence="1">
    <location>
        <begin position="64"/>
        <end position="84"/>
    </location>
</feature>
<feature type="transmembrane region" description="Helical" evidence="1">
    <location>
        <begin position="104"/>
        <end position="124"/>
    </location>
</feature>
<feature type="transmembrane region" description="Helical" evidence="1">
    <location>
        <begin position="133"/>
        <end position="153"/>
    </location>
</feature>
<feature type="transmembrane region" description="Helical" evidence="1">
    <location>
        <begin position="170"/>
        <end position="190"/>
    </location>
</feature>
<feature type="transmembrane region" description="Helical" evidence="1">
    <location>
        <begin position="197"/>
        <end position="217"/>
    </location>
</feature>
<feature type="transmembrane region" description="Helical" evidence="1">
    <location>
        <begin position="246"/>
        <end position="266"/>
    </location>
</feature>
<feature type="transmembrane region" description="Helical" evidence="1">
    <location>
        <begin position="284"/>
        <end position="303"/>
    </location>
</feature>
<feature type="transmembrane region" description="Helical" evidence="1">
    <location>
        <begin position="310"/>
        <end position="330"/>
    </location>
</feature>
<feature type="transmembrane region" description="Helical" evidence="1">
    <location>
        <begin position="346"/>
        <end position="366"/>
    </location>
</feature>
<feature type="transmembrane region" description="Helical" evidence="1">
    <location>
        <begin position="375"/>
        <end position="395"/>
    </location>
</feature>
<feature type="transmembrane region" description="Helical" evidence="1">
    <location>
        <begin position="415"/>
        <end position="435"/>
    </location>
</feature>
<feature type="region of interest" description="Disordered" evidence="2">
    <location>
        <begin position="441"/>
        <end position="461"/>
    </location>
</feature>
<feature type="mutagenesis site" description="Affects 5-formyltetrahydrofolate transporter activity." evidence="4">
    <original>R</original>
    <variation>C</variation>
    <location>
        <position position="53"/>
    </location>
</feature>
<feature type="mutagenesis site" description="Affects 5-formyltetrahydrofolate transporter activity." evidence="4">
    <original>K</original>
    <variation>C</variation>
    <location>
        <position position="61"/>
    </location>
</feature>
<feature type="mutagenesis site" description="Affects 5-formyltetrahydrofolate transporter activity." evidence="4">
    <original>D</original>
    <variation>C</variation>
    <location>
        <position position="62"/>
    </location>
</feature>
<feature type="mutagenesis site" description="Affects 5-formyltetrahydrofolate transporter activity." evidence="4">
    <original>W</original>
    <variation>C</variation>
    <location>
        <position position="82"/>
    </location>
</feature>
<feature type="mutagenesis site" description="Affects 5-formyltetrahydrofolate transporter activity." evidence="4">
    <original>K</original>
    <variation>C</variation>
    <location>
        <position position="85"/>
    </location>
</feature>
<feature type="mutagenesis site" description="Affects 5-formyltetrahydrofolate transporter activity." evidence="4">
    <original>D</original>
    <variation>C</variation>
    <location>
        <position position="93"/>
    </location>
</feature>
<feature type="mutagenesis site" description="Affects 5-formyltetrahydrofolate transporter activity." evidence="4">
    <original>D</original>
    <variation>C</variation>
    <location>
        <position position="145"/>
    </location>
</feature>
<feature type="mutagenesis site" description="Affects 5-formyltetrahydrofolate transporter activity." evidence="4">
    <original>D</original>
    <variation>C</variation>
    <location>
        <position position="149"/>
    </location>
</feature>
<feature type="mutagenesis site" description="Affects 5-formyltetrahydrofolate transporter activity." evidence="4">
    <original>R</original>
    <variation>C</variation>
    <location>
        <position position="155"/>
    </location>
</feature>
<feature type="mutagenesis site" description="Affects 5-formyltetrahydrofolate transporter activity." evidence="4">
    <original>F</original>
    <variation>C</variation>
    <location>
        <position position="252"/>
    </location>
</feature>
<feature type="mutagenesis site" description="Affects 5-formyltetrahydrofolate transporter activity." evidence="4">
    <original>T</original>
    <variation>C</variation>
    <location>
        <position position="259"/>
    </location>
</feature>
<feature type="mutagenesis site" description="Affects 5-formyltetrahydrofolate transporter activity." evidence="4">
    <original>E</original>
    <variation>C</variation>
    <location>
        <position position="263"/>
    </location>
</feature>
<feature type="mutagenesis site" description="Affects 5-formyltetrahydrofolate transporter activity." evidence="4">
    <original>F</original>
    <variation>C</variation>
    <location>
        <position position="267"/>
    </location>
</feature>
<feature type="mutagenesis site" description="Affects 5-formyltetrahydrofolate transporter activity." evidence="4">
    <original>R</original>
    <variation>C</variation>
    <location>
        <position position="309"/>
    </location>
</feature>
<feature type="mutagenesis site" description="Affects 5-formyltetrahydrofolate transporter activity." evidence="4">
    <original>R</original>
    <variation>C</variation>
    <location>
        <position position="335"/>
    </location>
</feature>
<feature type="mutagenesis site" description="Affects 5-formyltetrahydrofolate transporter activity." evidence="4">
    <original>D</original>
    <variation>C</variation>
    <location>
        <position position="348"/>
    </location>
</feature>
<feature type="mutagenesis site" description="Affects 5-formyltetrahydrofolate transporter activity." evidence="4">
    <original>Q</original>
    <variation>C</variation>
    <location>
        <position position="357"/>
    </location>
</feature>
<feature type="mutagenesis site" description="Affects 5-formyltetrahydrofolate transporter activity." evidence="4">
    <original>R</original>
    <variation>C</variation>
    <location>
        <position position="369"/>
    </location>
</feature>
<feature type="mutagenesis site" description="Affects 5-formyltetrahydrofolate transporter activity." evidence="4">
    <original>C</original>
    <variation>A</variation>
    <location>
        <position position="371"/>
    </location>
</feature>
<feature type="mutagenesis site" description="Affects 5-formyltetrahydrofolate transporter activity." evidence="4">
    <original>F</original>
    <variation>C</variation>
    <location>
        <position position="380"/>
    </location>
</feature>
<feature type="mutagenesis site" description="Affects 5-formyltetrahydrofolate transporter activity." evidence="4">
    <original>M</original>
    <variation>C</variation>
    <location>
        <position position="384"/>
    </location>
</feature>
<feature type="mutagenesis site" description="Affects 5-formyltetrahydrofolate transporter activity." evidence="4">
    <original>N</original>
    <variation>C</variation>
    <location>
        <position position="388"/>
    </location>
</feature>